<dbReference type="EMBL" id="CP000606">
    <property type="protein sequence ID" value="ABO24373.1"/>
    <property type="molecule type" value="Genomic_DNA"/>
</dbReference>
<dbReference type="RefSeq" id="WP_011866304.1">
    <property type="nucleotide sequence ID" value="NC_009092.1"/>
</dbReference>
<dbReference type="SMR" id="A3QFX5"/>
<dbReference type="STRING" id="323850.Shew_2507"/>
<dbReference type="KEGG" id="slo:Shew_2507"/>
<dbReference type="eggNOG" id="COG1219">
    <property type="taxonomic scope" value="Bacteria"/>
</dbReference>
<dbReference type="HOGENOM" id="CLU_014218_8_2_6"/>
<dbReference type="OrthoDB" id="9804062at2"/>
<dbReference type="Proteomes" id="UP000001558">
    <property type="component" value="Chromosome"/>
</dbReference>
<dbReference type="GO" id="GO:0009376">
    <property type="term" value="C:HslUV protease complex"/>
    <property type="evidence" value="ECO:0007669"/>
    <property type="project" value="TreeGrafter"/>
</dbReference>
<dbReference type="GO" id="GO:0005524">
    <property type="term" value="F:ATP binding"/>
    <property type="evidence" value="ECO:0007669"/>
    <property type="project" value="UniProtKB-UniRule"/>
</dbReference>
<dbReference type="GO" id="GO:0016887">
    <property type="term" value="F:ATP hydrolysis activity"/>
    <property type="evidence" value="ECO:0007669"/>
    <property type="project" value="InterPro"/>
</dbReference>
<dbReference type="GO" id="GO:0140662">
    <property type="term" value="F:ATP-dependent protein folding chaperone"/>
    <property type="evidence" value="ECO:0007669"/>
    <property type="project" value="InterPro"/>
</dbReference>
<dbReference type="GO" id="GO:0046983">
    <property type="term" value="F:protein dimerization activity"/>
    <property type="evidence" value="ECO:0007669"/>
    <property type="project" value="InterPro"/>
</dbReference>
<dbReference type="GO" id="GO:0051082">
    <property type="term" value="F:unfolded protein binding"/>
    <property type="evidence" value="ECO:0007669"/>
    <property type="project" value="UniProtKB-UniRule"/>
</dbReference>
<dbReference type="GO" id="GO:0008270">
    <property type="term" value="F:zinc ion binding"/>
    <property type="evidence" value="ECO:0007669"/>
    <property type="project" value="InterPro"/>
</dbReference>
<dbReference type="GO" id="GO:0051301">
    <property type="term" value="P:cell division"/>
    <property type="evidence" value="ECO:0007669"/>
    <property type="project" value="TreeGrafter"/>
</dbReference>
<dbReference type="GO" id="GO:0051603">
    <property type="term" value="P:proteolysis involved in protein catabolic process"/>
    <property type="evidence" value="ECO:0007669"/>
    <property type="project" value="TreeGrafter"/>
</dbReference>
<dbReference type="CDD" id="cd19497">
    <property type="entry name" value="RecA-like_ClpX"/>
    <property type="match status" value="1"/>
</dbReference>
<dbReference type="FunFam" id="1.10.8.60:FF:000002">
    <property type="entry name" value="ATP-dependent Clp protease ATP-binding subunit ClpX"/>
    <property type="match status" value="1"/>
</dbReference>
<dbReference type="FunFam" id="3.40.50.300:FF:000005">
    <property type="entry name" value="ATP-dependent Clp protease ATP-binding subunit ClpX"/>
    <property type="match status" value="1"/>
</dbReference>
<dbReference type="Gene3D" id="1.10.8.60">
    <property type="match status" value="1"/>
</dbReference>
<dbReference type="Gene3D" id="6.20.220.10">
    <property type="entry name" value="ClpX chaperone, C4-type zinc finger domain"/>
    <property type="match status" value="1"/>
</dbReference>
<dbReference type="Gene3D" id="3.40.50.300">
    <property type="entry name" value="P-loop containing nucleotide triphosphate hydrolases"/>
    <property type="match status" value="1"/>
</dbReference>
<dbReference type="HAMAP" id="MF_00175">
    <property type="entry name" value="ClpX"/>
    <property type="match status" value="1"/>
</dbReference>
<dbReference type="InterPro" id="IPR003593">
    <property type="entry name" value="AAA+_ATPase"/>
</dbReference>
<dbReference type="InterPro" id="IPR050052">
    <property type="entry name" value="ATP-dep_Clp_protease_ClpX"/>
</dbReference>
<dbReference type="InterPro" id="IPR003959">
    <property type="entry name" value="ATPase_AAA_core"/>
</dbReference>
<dbReference type="InterPro" id="IPR019489">
    <property type="entry name" value="Clp_ATPase_C"/>
</dbReference>
<dbReference type="InterPro" id="IPR004487">
    <property type="entry name" value="Clp_protease_ATP-bd_su_ClpX"/>
</dbReference>
<dbReference type="InterPro" id="IPR046425">
    <property type="entry name" value="ClpX_bact"/>
</dbReference>
<dbReference type="InterPro" id="IPR027417">
    <property type="entry name" value="P-loop_NTPase"/>
</dbReference>
<dbReference type="InterPro" id="IPR010603">
    <property type="entry name" value="Znf_CppX_C4"/>
</dbReference>
<dbReference type="InterPro" id="IPR038366">
    <property type="entry name" value="Znf_CppX_C4_sf"/>
</dbReference>
<dbReference type="NCBIfam" id="TIGR00382">
    <property type="entry name" value="clpX"/>
    <property type="match status" value="1"/>
</dbReference>
<dbReference type="NCBIfam" id="NF003745">
    <property type="entry name" value="PRK05342.1"/>
    <property type="match status" value="1"/>
</dbReference>
<dbReference type="PANTHER" id="PTHR48102:SF7">
    <property type="entry name" value="ATP-DEPENDENT CLP PROTEASE ATP-BINDING SUBUNIT CLPX-LIKE, MITOCHONDRIAL"/>
    <property type="match status" value="1"/>
</dbReference>
<dbReference type="PANTHER" id="PTHR48102">
    <property type="entry name" value="ATP-DEPENDENT CLP PROTEASE ATP-BINDING SUBUNIT CLPX-LIKE, MITOCHONDRIAL-RELATED"/>
    <property type="match status" value="1"/>
</dbReference>
<dbReference type="Pfam" id="PF07724">
    <property type="entry name" value="AAA_2"/>
    <property type="match status" value="1"/>
</dbReference>
<dbReference type="Pfam" id="PF10431">
    <property type="entry name" value="ClpB_D2-small"/>
    <property type="match status" value="1"/>
</dbReference>
<dbReference type="Pfam" id="PF06689">
    <property type="entry name" value="zf-C4_ClpX"/>
    <property type="match status" value="1"/>
</dbReference>
<dbReference type="SMART" id="SM00382">
    <property type="entry name" value="AAA"/>
    <property type="match status" value="1"/>
</dbReference>
<dbReference type="SMART" id="SM01086">
    <property type="entry name" value="ClpB_D2-small"/>
    <property type="match status" value="1"/>
</dbReference>
<dbReference type="SMART" id="SM00994">
    <property type="entry name" value="zf-C4_ClpX"/>
    <property type="match status" value="1"/>
</dbReference>
<dbReference type="SUPFAM" id="SSF57716">
    <property type="entry name" value="Glucocorticoid receptor-like (DNA-binding domain)"/>
    <property type="match status" value="1"/>
</dbReference>
<dbReference type="SUPFAM" id="SSF52540">
    <property type="entry name" value="P-loop containing nucleoside triphosphate hydrolases"/>
    <property type="match status" value="1"/>
</dbReference>
<dbReference type="PROSITE" id="PS51902">
    <property type="entry name" value="CLPX_ZB"/>
    <property type="match status" value="1"/>
</dbReference>
<feature type="chain" id="PRO_1000024654" description="ATP-dependent Clp protease ATP-binding subunit ClpX">
    <location>
        <begin position="1"/>
        <end position="426"/>
    </location>
</feature>
<feature type="domain" description="ClpX-type ZB" evidence="2">
    <location>
        <begin position="4"/>
        <end position="57"/>
    </location>
</feature>
<feature type="binding site" evidence="2">
    <location>
        <position position="16"/>
    </location>
    <ligand>
        <name>Zn(2+)</name>
        <dbReference type="ChEBI" id="CHEBI:29105"/>
    </ligand>
</feature>
<feature type="binding site" evidence="2">
    <location>
        <position position="19"/>
    </location>
    <ligand>
        <name>Zn(2+)</name>
        <dbReference type="ChEBI" id="CHEBI:29105"/>
    </ligand>
</feature>
<feature type="binding site" evidence="2">
    <location>
        <position position="38"/>
    </location>
    <ligand>
        <name>Zn(2+)</name>
        <dbReference type="ChEBI" id="CHEBI:29105"/>
    </ligand>
</feature>
<feature type="binding site" evidence="2">
    <location>
        <position position="41"/>
    </location>
    <ligand>
        <name>Zn(2+)</name>
        <dbReference type="ChEBI" id="CHEBI:29105"/>
    </ligand>
</feature>
<feature type="binding site" evidence="1">
    <location>
        <begin position="121"/>
        <end position="128"/>
    </location>
    <ligand>
        <name>ATP</name>
        <dbReference type="ChEBI" id="CHEBI:30616"/>
    </ligand>
</feature>
<name>CLPX_SHELP</name>
<proteinExistence type="inferred from homology"/>
<protein>
    <recommendedName>
        <fullName evidence="1">ATP-dependent Clp protease ATP-binding subunit ClpX</fullName>
    </recommendedName>
</protein>
<keyword id="KW-0067">ATP-binding</keyword>
<keyword id="KW-0143">Chaperone</keyword>
<keyword id="KW-0479">Metal-binding</keyword>
<keyword id="KW-0547">Nucleotide-binding</keyword>
<keyword id="KW-1185">Reference proteome</keyword>
<keyword id="KW-0862">Zinc</keyword>
<organism>
    <name type="scientific">Shewanella loihica (strain ATCC BAA-1088 / PV-4)</name>
    <dbReference type="NCBI Taxonomy" id="323850"/>
    <lineage>
        <taxon>Bacteria</taxon>
        <taxon>Pseudomonadati</taxon>
        <taxon>Pseudomonadota</taxon>
        <taxon>Gammaproteobacteria</taxon>
        <taxon>Alteromonadales</taxon>
        <taxon>Shewanellaceae</taxon>
        <taxon>Shewanella</taxon>
    </lineage>
</organism>
<comment type="function">
    <text evidence="1">ATP-dependent specificity component of the Clp protease. It directs the protease to specific substrates. Can perform chaperone functions in the absence of ClpP.</text>
</comment>
<comment type="subunit">
    <text evidence="1">Component of the ClpX-ClpP complex. Forms a hexameric ring that, in the presence of ATP, binds to fourteen ClpP subunits assembled into a disk-like structure with a central cavity, resembling the structure of eukaryotic proteasomes.</text>
</comment>
<comment type="similarity">
    <text evidence="1">Belongs to the ClpX chaperone family.</text>
</comment>
<evidence type="ECO:0000255" key="1">
    <source>
        <dbReference type="HAMAP-Rule" id="MF_00175"/>
    </source>
</evidence>
<evidence type="ECO:0000255" key="2">
    <source>
        <dbReference type="PROSITE-ProRule" id="PRU01250"/>
    </source>
</evidence>
<sequence>MGDNKSNGDSGKLLYCSFCGKSQHEVRKLIAGPSVYVCDECVELCNDIIREEIREISPKQDQDRLPTPHELRAHLDDYVIGQEKAKKVLSVAVYNHYKRLKNATPKDGVELGKSNILLIGPTGSGKTLLAETLARFLNVPFTMADATTLTEAGYVGEDVENIIQKLLQKCDYDVEKAQRGIVYIDEIDKISRKSDNPSITRDVSGEGVQQALLKLIEGTVAAVPPQGGRKHPQQEFLQVDTSKILFICGGAFAGLEKVIEQRSHVGTGIGFGAEVKGEADKATISDVLLQVEPEDLVKYGLIPEFIGRLPVLATLAELDEAALIQILSEPKNALTKQFAALFEMEGVELEFREDALKAIALKAMDRKTGARGLRSIVEGILLDIMYDLPSTENVAKVVIDESVVKGESAPILIYEANETQAAVAEQ</sequence>
<gene>
    <name evidence="1" type="primary">clpX</name>
    <name type="ordered locus">Shew_2507</name>
</gene>
<accession>A3QFX5</accession>
<reference key="1">
    <citation type="submission" date="2007-03" db="EMBL/GenBank/DDBJ databases">
        <title>Complete sequence of Shewanella loihica PV-4.</title>
        <authorList>
            <consortium name="US DOE Joint Genome Institute"/>
            <person name="Copeland A."/>
            <person name="Lucas S."/>
            <person name="Lapidus A."/>
            <person name="Barry K."/>
            <person name="Detter J.C."/>
            <person name="Glavina del Rio T."/>
            <person name="Hammon N."/>
            <person name="Israni S."/>
            <person name="Dalin E."/>
            <person name="Tice H."/>
            <person name="Pitluck S."/>
            <person name="Chain P."/>
            <person name="Malfatti S."/>
            <person name="Shin M."/>
            <person name="Vergez L."/>
            <person name="Schmutz J."/>
            <person name="Larimer F."/>
            <person name="Land M."/>
            <person name="Hauser L."/>
            <person name="Kyrpides N."/>
            <person name="Mikhailova N."/>
            <person name="Romine M.F."/>
            <person name="Serres G."/>
            <person name="Fredrickson J."/>
            <person name="Tiedje J."/>
            <person name="Richardson P."/>
        </authorList>
    </citation>
    <scope>NUCLEOTIDE SEQUENCE [LARGE SCALE GENOMIC DNA]</scope>
    <source>
        <strain>ATCC BAA-1088 / PV-4</strain>
    </source>
</reference>